<protein>
    <recommendedName>
        <fullName>Antitoxin YefM</fullName>
    </recommendedName>
</protein>
<sequence length="90" mass="10199">MRTISYSEARQNLSATMMKAVEDHAPILITRQNGEACVLMSLEEYNSLEETAYLLRSPANARRLMDSIDSLKSGKGTEKDIIEWVMLPTY</sequence>
<proteinExistence type="inferred from homology"/>
<reference key="1">
    <citation type="journal article" date="2002" name="Nucleic Acids Res.">
        <title>Genome sequence of Shigella flexneri 2a: insights into pathogenicity through comparison with genomes of Escherichia coli K12 and O157.</title>
        <authorList>
            <person name="Jin Q."/>
            <person name="Yuan Z."/>
            <person name="Xu J."/>
            <person name="Wang Y."/>
            <person name="Shen Y."/>
            <person name="Lu W."/>
            <person name="Wang J."/>
            <person name="Liu H."/>
            <person name="Yang J."/>
            <person name="Yang F."/>
            <person name="Zhang X."/>
            <person name="Zhang J."/>
            <person name="Yang G."/>
            <person name="Wu H."/>
            <person name="Qu D."/>
            <person name="Dong J."/>
            <person name="Sun L."/>
            <person name="Xue Y."/>
            <person name="Zhao A."/>
            <person name="Gao Y."/>
            <person name="Zhu J."/>
            <person name="Kan B."/>
            <person name="Ding K."/>
            <person name="Chen S."/>
            <person name="Cheng H."/>
            <person name="Yao Z."/>
            <person name="He B."/>
            <person name="Chen R."/>
            <person name="Ma D."/>
            <person name="Qiang B."/>
            <person name="Wen Y."/>
            <person name="Hou Y."/>
            <person name="Yu J."/>
        </authorList>
    </citation>
    <scope>NUCLEOTIDE SEQUENCE [LARGE SCALE GENOMIC DNA]</scope>
    <source>
        <strain>301 / Serotype 2a</strain>
    </source>
</reference>
<reference key="2">
    <citation type="journal article" date="2003" name="Infect. Immun.">
        <title>Complete genome sequence and comparative genomics of Shigella flexneri serotype 2a strain 2457T.</title>
        <authorList>
            <person name="Wei J."/>
            <person name="Goldberg M.B."/>
            <person name="Burland V."/>
            <person name="Venkatesan M.M."/>
            <person name="Deng W."/>
            <person name="Fournier G."/>
            <person name="Mayhew G.F."/>
            <person name="Plunkett G. III"/>
            <person name="Rose D.J."/>
            <person name="Darling A."/>
            <person name="Mau B."/>
            <person name="Perna N.T."/>
            <person name="Payne S.M."/>
            <person name="Runyen-Janecky L.J."/>
            <person name="Zhou S."/>
            <person name="Schwartz D.C."/>
            <person name="Blattner F.R."/>
        </authorList>
    </citation>
    <scope>NUCLEOTIDE SEQUENCE [LARGE SCALE GENOMIC DNA]</scope>
    <source>
        <strain>ATCC 700930 / 2457T / Serotype 2a</strain>
    </source>
</reference>
<reference key="3">
    <citation type="journal article" date="2005" name="Nucleic Acids Res.">
        <title>Toxin-antitoxin loci are highly abundant in free-living but lost from host-associated prokaryotes.</title>
        <authorList>
            <person name="Pandey D.P."/>
            <person name="Gerdes K."/>
        </authorList>
    </citation>
    <scope>POSSIBLE FUNCTION</scope>
    <source>
        <strain>301 / Serotype 2a</strain>
        <strain>ATCC 700930 / 2457T / Serotype 2a</strain>
    </source>
</reference>
<comment type="function">
    <text evidence="1">Antitoxin component of a type II toxin-antitoxin (TA) system. Antitoxin that counteracts the effect of the YoeB mRNA interferase. YefM binds to the promoter region of the yefM-yeoB operon to repress transcription, YeoB acts as a corepressor (By similarity).</text>
</comment>
<comment type="subunit">
    <text evidence="1">Forms a complex with YoeB which inhibits its toxin activity.</text>
</comment>
<comment type="similarity">
    <text evidence="2">Belongs to the phD/YefM antitoxin family.</text>
</comment>
<dbReference type="EMBL" id="AE005674">
    <property type="protein sequence ID" value="AAN43619.1"/>
    <property type="molecule type" value="Genomic_DNA"/>
</dbReference>
<dbReference type="EMBL" id="AE014073">
    <property type="protein sequence ID" value="AAP17448.1"/>
    <property type="molecule type" value="Genomic_DNA"/>
</dbReference>
<dbReference type="RefSeq" id="NP_707912.1">
    <property type="nucleotide sequence ID" value="NC_004337.2"/>
</dbReference>
<dbReference type="RefSeq" id="WP_001259256.1">
    <property type="nucleotide sequence ID" value="NZ_WPGW01000112.1"/>
</dbReference>
<dbReference type="SMR" id="Q83KJ8"/>
<dbReference type="STRING" id="198214.SF2079"/>
<dbReference type="PaxDb" id="198214-SF2079"/>
<dbReference type="GeneID" id="1025294"/>
<dbReference type="KEGG" id="sfl:SF2079"/>
<dbReference type="KEGG" id="sfx:S2201"/>
<dbReference type="PATRIC" id="fig|198214.7.peg.2489"/>
<dbReference type="HOGENOM" id="CLU_155837_1_0_6"/>
<dbReference type="Proteomes" id="UP000001006">
    <property type="component" value="Chromosome"/>
</dbReference>
<dbReference type="Proteomes" id="UP000002673">
    <property type="component" value="Chromosome"/>
</dbReference>
<dbReference type="GO" id="GO:0003677">
    <property type="term" value="F:DNA binding"/>
    <property type="evidence" value="ECO:0007669"/>
    <property type="project" value="UniProtKB-KW"/>
</dbReference>
<dbReference type="FunFam" id="3.40.1620.10:FF:000001">
    <property type="entry name" value="Antitoxin"/>
    <property type="match status" value="1"/>
</dbReference>
<dbReference type="Gene3D" id="6.10.250.330">
    <property type="match status" value="1"/>
</dbReference>
<dbReference type="Gene3D" id="3.40.1620.10">
    <property type="entry name" value="YefM-like domain"/>
    <property type="match status" value="1"/>
</dbReference>
<dbReference type="InterPro" id="IPR006442">
    <property type="entry name" value="Antitoxin_Phd/YefM"/>
</dbReference>
<dbReference type="InterPro" id="IPR051405">
    <property type="entry name" value="phD/YefM_antitoxin"/>
</dbReference>
<dbReference type="InterPro" id="IPR036165">
    <property type="entry name" value="YefM-like_sf"/>
</dbReference>
<dbReference type="NCBIfam" id="TIGR01552">
    <property type="entry name" value="phd_fam"/>
    <property type="match status" value="1"/>
</dbReference>
<dbReference type="NCBIfam" id="NF008499">
    <property type="entry name" value="PRK11409.1"/>
    <property type="match status" value="1"/>
</dbReference>
<dbReference type="PANTHER" id="PTHR33713">
    <property type="entry name" value="ANTITOXIN YAFN-RELATED"/>
    <property type="match status" value="1"/>
</dbReference>
<dbReference type="PANTHER" id="PTHR33713:SF6">
    <property type="entry name" value="ANTITOXIN YEFM"/>
    <property type="match status" value="1"/>
</dbReference>
<dbReference type="Pfam" id="PF02604">
    <property type="entry name" value="PhdYeFM_antitox"/>
    <property type="match status" value="1"/>
</dbReference>
<dbReference type="SUPFAM" id="SSF143120">
    <property type="entry name" value="YefM-like"/>
    <property type="match status" value="1"/>
</dbReference>
<accession>Q83KJ8</accession>
<accession>Q7C112</accession>
<feature type="chain" id="PRO_0000213740" description="Antitoxin YefM">
    <location>
        <begin position="1"/>
        <end position="90"/>
    </location>
</feature>
<gene>
    <name type="primary">yefM</name>
    <name type="ordered locus">SF2079</name>
    <name type="ordered locus">S2201</name>
</gene>
<organism>
    <name type="scientific">Shigella flexneri</name>
    <dbReference type="NCBI Taxonomy" id="623"/>
    <lineage>
        <taxon>Bacteria</taxon>
        <taxon>Pseudomonadati</taxon>
        <taxon>Pseudomonadota</taxon>
        <taxon>Gammaproteobacteria</taxon>
        <taxon>Enterobacterales</taxon>
        <taxon>Enterobacteriaceae</taxon>
        <taxon>Shigella</taxon>
    </lineage>
</organism>
<evidence type="ECO:0000250" key="1"/>
<evidence type="ECO:0000305" key="2"/>
<keyword id="KW-0238">DNA-binding</keyword>
<keyword id="KW-1185">Reference proteome</keyword>
<keyword id="KW-0678">Repressor</keyword>
<keyword id="KW-1277">Toxin-antitoxin system</keyword>
<keyword id="KW-0804">Transcription</keyword>
<keyword id="KW-0805">Transcription regulation</keyword>
<name>YEFM_SHIFL</name>